<sequence length="180" mass="20736">MRITVSGLPGSGTTTVSKLLAEYYELELISSGEIFRRIAREKEMSLAEFGAMAEKDPSIDLAIDKNQREVIHSHEKLILESRLAGHMAKEVPNVLKIWIKAPLPVRVKRILRREKSVSFDEELERTVEREKSEALRYMNYYNIDIDDLSIYDIVIDSEKWNQYQILDILKVAIDSLVGPE</sequence>
<evidence type="ECO:0000255" key="1">
    <source>
        <dbReference type="HAMAP-Rule" id="MF_00239"/>
    </source>
</evidence>
<organism>
    <name type="scientific">Methanosarcina barkeri (strain Fusaro / DSM 804)</name>
    <dbReference type="NCBI Taxonomy" id="269797"/>
    <lineage>
        <taxon>Archaea</taxon>
        <taxon>Methanobacteriati</taxon>
        <taxon>Methanobacteriota</taxon>
        <taxon>Stenosarchaea group</taxon>
        <taxon>Methanomicrobia</taxon>
        <taxon>Methanosarcinales</taxon>
        <taxon>Methanosarcinaceae</taxon>
        <taxon>Methanosarcina</taxon>
    </lineage>
</organism>
<reference key="1">
    <citation type="journal article" date="2006" name="J. Bacteriol.">
        <title>The Methanosarcina barkeri genome: comparative analysis with Methanosarcina acetivorans and Methanosarcina mazei reveals extensive rearrangement within methanosarcinal genomes.</title>
        <authorList>
            <person name="Maeder D.L."/>
            <person name="Anderson I."/>
            <person name="Brettin T.S."/>
            <person name="Bruce D.C."/>
            <person name="Gilna P."/>
            <person name="Han C.S."/>
            <person name="Lapidus A."/>
            <person name="Metcalf W.W."/>
            <person name="Saunders E."/>
            <person name="Tapia R."/>
            <person name="Sowers K.R."/>
        </authorList>
    </citation>
    <scope>NUCLEOTIDE SEQUENCE [LARGE SCALE GENOMIC DNA]</scope>
    <source>
        <strain>Fusaro / DSM 804</strain>
    </source>
</reference>
<name>KCY_METBF</name>
<keyword id="KW-0067">ATP-binding</keyword>
<keyword id="KW-0963">Cytoplasm</keyword>
<keyword id="KW-0418">Kinase</keyword>
<keyword id="KW-0547">Nucleotide-binding</keyword>
<keyword id="KW-0808">Transferase</keyword>
<dbReference type="EC" id="2.7.4.25" evidence="1"/>
<dbReference type="EMBL" id="CP000099">
    <property type="protein sequence ID" value="AAZ69070.1"/>
    <property type="molecule type" value="Genomic_DNA"/>
</dbReference>
<dbReference type="SMR" id="Q46GC2"/>
<dbReference type="STRING" id="269797.Mbar_A0083"/>
<dbReference type="PaxDb" id="269797-Mbar_A0083"/>
<dbReference type="KEGG" id="mba:Mbar_A0083"/>
<dbReference type="eggNOG" id="arCOG01037">
    <property type="taxonomic scope" value="Archaea"/>
</dbReference>
<dbReference type="HOGENOM" id="CLU_079959_1_0_2"/>
<dbReference type="OrthoDB" id="31096at2157"/>
<dbReference type="GO" id="GO:0005737">
    <property type="term" value="C:cytoplasm"/>
    <property type="evidence" value="ECO:0007669"/>
    <property type="project" value="UniProtKB-SubCell"/>
</dbReference>
<dbReference type="GO" id="GO:0005524">
    <property type="term" value="F:ATP binding"/>
    <property type="evidence" value="ECO:0007669"/>
    <property type="project" value="UniProtKB-UniRule"/>
</dbReference>
<dbReference type="GO" id="GO:0036430">
    <property type="term" value="F:CMP kinase activity"/>
    <property type="evidence" value="ECO:0007669"/>
    <property type="project" value="RHEA"/>
</dbReference>
<dbReference type="GO" id="GO:0036431">
    <property type="term" value="F:dCMP kinase activity"/>
    <property type="evidence" value="ECO:0007669"/>
    <property type="project" value="RHEA"/>
</dbReference>
<dbReference type="GO" id="GO:0006220">
    <property type="term" value="P:pyrimidine nucleotide metabolic process"/>
    <property type="evidence" value="ECO:0007669"/>
    <property type="project" value="UniProtKB-UniRule"/>
</dbReference>
<dbReference type="CDD" id="cd02020">
    <property type="entry name" value="CMPK"/>
    <property type="match status" value="1"/>
</dbReference>
<dbReference type="Gene3D" id="3.40.50.300">
    <property type="entry name" value="P-loop containing nucleotide triphosphate hydrolases"/>
    <property type="match status" value="1"/>
</dbReference>
<dbReference type="HAMAP" id="MF_00239">
    <property type="entry name" value="Cytidyl_kinase_type2"/>
    <property type="match status" value="1"/>
</dbReference>
<dbReference type="InterPro" id="IPR011892">
    <property type="entry name" value="Cyt_kin_arch"/>
</dbReference>
<dbReference type="InterPro" id="IPR011994">
    <property type="entry name" value="Cytidylate_kinase_dom"/>
</dbReference>
<dbReference type="InterPro" id="IPR027417">
    <property type="entry name" value="P-loop_NTPase"/>
</dbReference>
<dbReference type="NCBIfam" id="TIGR02173">
    <property type="entry name" value="cyt_kin_arch"/>
    <property type="match status" value="1"/>
</dbReference>
<dbReference type="Pfam" id="PF13189">
    <property type="entry name" value="Cytidylate_kin2"/>
    <property type="match status" value="1"/>
</dbReference>
<dbReference type="SUPFAM" id="SSF52540">
    <property type="entry name" value="P-loop containing nucleoside triphosphate hydrolases"/>
    <property type="match status" value="1"/>
</dbReference>
<proteinExistence type="inferred from homology"/>
<protein>
    <recommendedName>
        <fullName evidence="1">Cytidylate kinase</fullName>
        <shortName evidence="1">CK</shortName>
        <ecNumber evidence="1">2.7.4.25</ecNumber>
    </recommendedName>
    <alternativeName>
        <fullName evidence="1">Cytidine monophosphate kinase</fullName>
        <shortName evidence="1">CMP kinase</shortName>
    </alternativeName>
</protein>
<accession>Q46GC2</accession>
<gene>
    <name evidence="1" type="primary">cmk</name>
    <name type="ordered locus">Mbar_A0083</name>
</gene>
<comment type="catalytic activity">
    <reaction evidence="1">
        <text>CMP + ATP = CDP + ADP</text>
        <dbReference type="Rhea" id="RHEA:11600"/>
        <dbReference type="ChEBI" id="CHEBI:30616"/>
        <dbReference type="ChEBI" id="CHEBI:58069"/>
        <dbReference type="ChEBI" id="CHEBI:60377"/>
        <dbReference type="ChEBI" id="CHEBI:456216"/>
        <dbReference type="EC" id="2.7.4.25"/>
    </reaction>
</comment>
<comment type="catalytic activity">
    <reaction evidence="1">
        <text>dCMP + ATP = dCDP + ADP</text>
        <dbReference type="Rhea" id="RHEA:25094"/>
        <dbReference type="ChEBI" id="CHEBI:30616"/>
        <dbReference type="ChEBI" id="CHEBI:57566"/>
        <dbReference type="ChEBI" id="CHEBI:58593"/>
        <dbReference type="ChEBI" id="CHEBI:456216"/>
        <dbReference type="EC" id="2.7.4.25"/>
    </reaction>
</comment>
<comment type="subcellular location">
    <subcellularLocation>
        <location evidence="1">Cytoplasm</location>
    </subcellularLocation>
</comment>
<comment type="similarity">
    <text evidence="1">Belongs to the cytidylate kinase family. Type 2 subfamily.</text>
</comment>
<feature type="chain" id="PRO_1000005671" description="Cytidylate kinase">
    <location>
        <begin position="1"/>
        <end position="180"/>
    </location>
</feature>
<feature type="binding site" evidence="1">
    <location>
        <begin position="7"/>
        <end position="15"/>
    </location>
    <ligand>
        <name>ATP</name>
        <dbReference type="ChEBI" id="CHEBI:30616"/>
    </ligand>
</feature>